<protein>
    <recommendedName>
        <fullName evidence="1">UPF0227 protein YcfP</fullName>
    </recommendedName>
</protein>
<reference key="1">
    <citation type="journal article" date="2011" name="J. Bacteriol.">
        <title>Comparative genomics of 28 Salmonella enterica isolates: evidence for CRISPR-mediated adaptive sublineage evolution.</title>
        <authorList>
            <person name="Fricke W.F."/>
            <person name="Mammel M.K."/>
            <person name="McDermott P.F."/>
            <person name="Tartera C."/>
            <person name="White D.G."/>
            <person name="Leclerc J.E."/>
            <person name="Ravel J."/>
            <person name="Cebula T.A."/>
        </authorList>
    </citation>
    <scope>NUCLEOTIDE SEQUENCE [LARGE SCALE GENOMIC DNA]</scope>
    <source>
        <strain>SL254</strain>
    </source>
</reference>
<gene>
    <name evidence="1" type="primary">ycfP</name>
    <name type="ordered locus">SNSL254_A1309</name>
</gene>
<name>YCFP_SALNS</name>
<sequence>MIIYLHGFDSNSPGNHEKVLQLQFIDPDVRLVSYSTRHPKHDMQHLLKEVDKMLQLNVDERPLICGVGLGGYWAERIGFLCDIRQVVFNPNLFPYENMEGKIDRPEEYADIATKCVTNFREKNRDRCLVILSRHDEALDSQRSAQALHPFYEIVWDEEQTHKFKNISPHLQRIKAFKTLG</sequence>
<comment type="similarity">
    <text evidence="1">Belongs to the UPF0227 family.</text>
</comment>
<feature type="chain" id="PRO_1000136199" description="UPF0227 protein YcfP">
    <location>
        <begin position="1"/>
        <end position="180"/>
    </location>
</feature>
<dbReference type="EMBL" id="CP001113">
    <property type="protein sequence ID" value="ACF61483.1"/>
    <property type="molecule type" value="Genomic_DNA"/>
</dbReference>
<dbReference type="RefSeq" id="WP_000587943.1">
    <property type="nucleotide sequence ID" value="NZ_CCMR01000003.1"/>
</dbReference>
<dbReference type="SMR" id="B4T3P7"/>
<dbReference type="ESTHER" id="salty-ycfp">
    <property type="family name" value="abh_upf00227"/>
</dbReference>
<dbReference type="KEGG" id="see:SNSL254_A1309"/>
<dbReference type="HOGENOM" id="CLU_128769_0_0_6"/>
<dbReference type="Proteomes" id="UP000008824">
    <property type="component" value="Chromosome"/>
</dbReference>
<dbReference type="FunFam" id="3.40.50.1820:FF:000007">
    <property type="entry name" value="UPF0227 protein YcfP"/>
    <property type="match status" value="1"/>
</dbReference>
<dbReference type="Gene3D" id="3.40.50.1820">
    <property type="entry name" value="alpha/beta hydrolase"/>
    <property type="match status" value="1"/>
</dbReference>
<dbReference type="HAMAP" id="MF_01047">
    <property type="entry name" value="UPF0227"/>
    <property type="match status" value="1"/>
</dbReference>
<dbReference type="InterPro" id="IPR029058">
    <property type="entry name" value="AB_hydrolase_fold"/>
</dbReference>
<dbReference type="InterPro" id="IPR022987">
    <property type="entry name" value="UPF0227"/>
</dbReference>
<dbReference type="InterPro" id="IPR008886">
    <property type="entry name" value="UPF0227/Esterase_YqiA"/>
</dbReference>
<dbReference type="NCBIfam" id="NF003431">
    <property type="entry name" value="PRK04940.1"/>
    <property type="match status" value="1"/>
</dbReference>
<dbReference type="PANTHER" id="PTHR35602">
    <property type="entry name" value="ESTERASE YQIA-RELATED"/>
    <property type="match status" value="1"/>
</dbReference>
<dbReference type="PANTHER" id="PTHR35602:SF2">
    <property type="entry name" value="UPF0227 PROTEIN YCFP"/>
    <property type="match status" value="1"/>
</dbReference>
<dbReference type="Pfam" id="PF05728">
    <property type="entry name" value="UPF0227"/>
    <property type="match status" value="1"/>
</dbReference>
<dbReference type="SUPFAM" id="SSF53474">
    <property type="entry name" value="alpha/beta-Hydrolases"/>
    <property type="match status" value="1"/>
</dbReference>
<proteinExistence type="inferred from homology"/>
<accession>B4T3P7</accession>
<organism>
    <name type="scientific">Salmonella newport (strain SL254)</name>
    <dbReference type="NCBI Taxonomy" id="423368"/>
    <lineage>
        <taxon>Bacteria</taxon>
        <taxon>Pseudomonadati</taxon>
        <taxon>Pseudomonadota</taxon>
        <taxon>Gammaproteobacteria</taxon>
        <taxon>Enterobacterales</taxon>
        <taxon>Enterobacteriaceae</taxon>
        <taxon>Salmonella</taxon>
    </lineage>
</organism>
<evidence type="ECO:0000255" key="1">
    <source>
        <dbReference type="HAMAP-Rule" id="MF_01047"/>
    </source>
</evidence>